<dbReference type="EC" id="6.3.2.8" evidence="1"/>
<dbReference type="EMBL" id="CP000319">
    <property type="protein sequence ID" value="ABE62105.1"/>
    <property type="molecule type" value="Genomic_DNA"/>
</dbReference>
<dbReference type="RefSeq" id="WP_011509797.1">
    <property type="nucleotide sequence ID" value="NC_007964.1"/>
</dbReference>
<dbReference type="SMR" id="Q1QNU2"/>
<dbReference type="STRING" id="323097.Nham_1280"/>
<dbReference type="KEGG" id="nha:Nham_1280"/>
<dbReference type="eggNOG" id="COG0773">
    <property type="taxonomic scope" value="Bacteria"/>
</dbReference>
<dbReference type="HOGENOM" id="CLU_028104_2_2_5"/>
<dbReference type="OrthoDB" id="9804126at2"/>
<dbReference type="UniPathway" id="UPA00219"/>
<dbReference type="Proteomes" id="UP000001953">
    <property type="component" value="Chromosome"/>
</dbReference>
<dbReference type="GO" id="GO:0005737">
    <property type="term" value="C:cytoplasm"/>
    <property type="evidence" value="ECO:0007669"/>
    <property type="project" value="UniProtKB-SubCell"/>
</dbReference>
<dbReference type="GO" id="GO:0005524">
    <property type="term" value="F:ATP binding"/>
    <property type="evidence" value="ECO:0007669"/>
    <property type="project" value="UniProtKB-UniRule"/>
</dbReference>
<dbReference type="GO" id="GO:0008763">
    <property type="term" value="F:UDP-N-acetylmuramate-L-alanine ligase activity"/>
    <property type="evidence" value="ECO:0007669"/>
    <property type="project" value="UniProtKB-UniRule"/>
</dbReference>
<dbReference type="GO" id="GO:0051301">
    <property type="term" value="P:cell division"/>
    <property type="evidence" value="ECO:0007669"/>
    <property type="project" value="UniProtKB-KW"/>
</dbReference>
<dbReference type="GO" id="GO:0071555">
    <property type="term" value="P:cell wall organization"/>
    <property type="evidence" value="ECO:0007669"/>
    <property type="project" value="UniProtKB-KW"/>
</dbReference>
<dbReference type="GO" id="GO:0009252">
    <property type="term" value="P:peptidoglycan biosynthetic process"/>
    <property type="evidence" value="ECO:0007669"/>
    <property type="project" value="UniProtKB-UniRule"/>
</dbReference>
<dbReference type="GO" id="GO:0008360">
    <property type="term" value="P:regulation of cell shape"/>
    <property type="evidence" value="ECO:0007669"/>
    <property type="project" value="UniProtKB-KW"/>
</dbReference>
<dbReference type="Gene3D" id="3.90.190.20">
    <property type="entry name" value="Mur ligase, C-terminal domain"/>
    <property type="match status" value="1"/>
</dbReference>
<dbReference type="Gene3D" id="3.40.1190.10">
    <property type="entry name" value="Mur-like, catalytic domain"/>
    <property type="match status" value="1"/>
</dbReference>
<dbReference type="Gene3D" id="3.40.50.720">
    <property type="entry name" value="NAD(P)-binding Rossmann-like Domain"/>
    <property type="match status" value="1"/>
</dbReference>
<dbReference type="HAMAP" id="MF_00046">
    <property type="entry name" value="MurC"/>
    <property type="match status" value="1"/>
</dbReference>
<dbReference type="InterPro" id="IPR036565">
    <property type="entry name" value="Mur-like_cat_sf"/>
</dbReference>
<dbReference type="InterPro" id="IPR004101">
    <property type="entry name" value="Mur_ligase_C"/>
</dbReference>
<dbReference type="InterPro" id="IPR036615">
    <property type="entry name" value="Mur_ligase_C_dom_sf"/>
</dbReference>
<dbReference type="InterPro" id="IPR013221">
    <property type="entry name" value="Mur_ligase_cen"/>
</dbReference>
<dbReference type="InterPro" id="IPR000713">
    <property type="entry name" value="Mur_ligase_N"/>
</dbReference>
<dbReference type="InterPro" id="IPR050061">
    <property type="entry name" value="MurCDEF_pg_biosynth"/>
</dbReference>
<dbReference type="InterPro" id="IPR005758">
    <property type="entry name" value="UDP-N-AcMur_Ala_ligase_MurC"/>
</dbReference>
<dbReference type="NCBIfam" id="TIGR01082">
    <property type="entry name" value="murC"/>
    <property type="match status" value="1"/>
</dbReference>
<dbReference type="PANTHER" id="PTHR43445:SF3">
    <property type="entry name" value="UDP-N-ACETYLMURAMATE--L-ALANINE LIGASE"/>
    <property type="match status" value="1"/>
</dbReference>
<dbReference type="PANTHER" id="PTHR43445">
    <property type="entry name" value="UDP-N-ACETYLMURAMATE--L-ALANINE LIGASE-RELATED"/>
    <property type="match status" value="1"/>
</dbReference>
<dbReference type="Pfam" id="PF01225">
    <property type="entry name" value="Mur_ligase"/>
    <property type="match status" value="1"/>
</dbReference>
<dbReference type="Pfam" id="PF02875">
    <property type="entry name" value="Mur_ligase_C"/>
    <property type="match status" value="1"/>
</dbReference>
<dbReference type="Pfam" id="PF08245">
    <property type="entry name" value="Mur_ligase_M"/>
    <property type="match status" value="1"/>
</dbReference>
<dbReference type="SUPFAM" id="SSF51984">
    <property type="entry name" value="MurCD N-terminal domain"/>
    <property type="match status" value="1"/>
</dbReference>
<dbReference type="SUPFAM" id="SSF53623">
    <property type="entry name" value="MurD-like peptide ligases, catalytic domain"/>
    <property type="match status" value="1"/>
</dbReference>
<dbReference type="SUPFAM" id="SSF53244">
    <property type="entry name" value="MurD-like peptide ligases, peptide-binding domain"/>
    <property type="match status" value="1"/>
</dbReference>
<gene>
    <name evidence="1" type="primary">murC</name>
    <name type="ordered locus">Nham_1280</name>
</gene>
<protein>
    <recommendedName>
        <fullName evidence="1">UDP-N-acetylmuramate--L-alanine ligase</fullName>
        <ecNumber evidence="1">6.3.2.8</ecNumber>
    </recommendedName>
    <alternativeName>
        <fullName evidence="1">UDP-N-acetylmuramoyl-L-alanine synthetase</fullName>
    </alternativeName>
</protein>
<sequence>MRLPREIGPIHFVGIGGIGMSGIAEVLCNLGYTVQGSDASEGANVVRLRDKGIKVTVGHRAENVSGADVLVVSTAIRRDNPELMAARAQRIPVVRRAEMLAELMRLKSCVAIAGTHGKTTTTSMVAALLDAGDFDPTVINGGIINAYGTNARLGAGEWMVVEADESDGTFLKLPTDVAIVTNVDPEHLDHFKTFDAVQDAFRSFVENVPFYGFAVMCIDHPVVQSMVGRIEDRRIVTYGENPQADARLVDLAPNGGGSHFKVVFRNRKTDAAHEVSDLVLPMPGRHNALNATAAIAVAHELGIPDATIRKAIAAFGGVKRRFTKTGEWNGVTIIDDYGHHPVEIAAVLKAARESTGGKVVAVVQPHRYTRLQSLFEEFCTCFNDADTVVVAEVYPAGEAPIAGIDRDHFVLGLRAHGHREVVPLQEPAALAGVIAGLAKPGDYVVCLGAGNITQWAYALPGELKALG</sequence>
<feature type="chain" id="PRO_1000004379" description="UDP-N-acetylmuramate--L-alanine ligase">
    <location>
        <begin position="1"/>
        <end position="467"/>
    </location>
</feature>
<feature type="binding site" evidence="1">
    <location>
        <begin position="114"/>
        <end position="120"/>
    </location>
    <ligand>
        <name>ATP</name>
        <dbReference type="ChEBI" id="CHEBI:30616"/>
    </ligand>
</feature>
<reference key="1">
    <citation type="submission" date="2006-03" db="EMBL/GenBank/DDBJ databases">
        <title>Complete sequence of chromosome of Nitrobacter hamburgensis X14.</title>
        <authorList>
            <consortium name="US DOE Joint Genome Institute"/>
            <person name="Copeland A."/>
            <person name="Lucas S."/>
            <person name="Lapidus A."/>
            <person name="Barry K."/>
            <person name="Detter J.C."/>
            <person name="Glavina del Rio T."/>
            <person name="Hammon N."/>
            <person name="Israni S."/>
            <person name="Dalin E."/>
            <person name="Tice H."/>
            <person name="Pitluck S."/>
            <person name="Chain P."/>
            <person name="Malfatti S."/>
            <person name="Shin M."/>
            <person name="Vergez L."/>
            <person name="Schmutz J."/>
            <person name="Larimer F."/>
            <person name="Land M."/>
            <person name="Hauser L."/>
            <person name="Kyrpides N."/>
            <person name="Ivanova N."/>
            <person name="Ward B."/>
            <person name="Arp D."/>
            <person name="Klotz M."/>
            <person name="Stein L."/>
            <person name="O'Mullan G."/>
            <person name="Starkenburg S."/>
            <person name="Sayavedra L."/>
            <person name="Poret-Peterson A.T."/>
            <person name="Gentry M.E."/>
            <person name="Bruce D."/>
            <person name="Richardson P."/>
        </authorList>
    </citation>
    <scope>NUCLEOTIDE SEQUENCE [LARGE SCALE GENOMIC DNA]</scope>
    <source>
        <strain>DSM 10229 / NCIMB 13809 / X14</strain>
    </source>
</reference>
<evidence type="ECO:0000255" key="1">
    <source>
        <dbReference type="HAMAP-Rule" id="MF_00046"/>
    </source>
</evidence>
<comment type="function">
    <text evidence="1">Cell wall formation.</text>
</comment>
<comment type="catalytic activity">
    <reaction evidence="1">
        <text>UDP-N-acetyl-alpha-D-muramate + L-alanine + ATP = UDP-N-acetyl-alpha-D-muramoyl-L-alanine + ADP + phosphate + H(+)</text>
        <dbReference type="Rhea" id="RHEA:23372"/>
        <dbReference type="ChEBI" id="CHEBI:15378"/>
        <dbReference type="ChEBI" id="CHEBI:30616"/>
        <dbReference type="ChEBI" id="CHEBI:43474"/>
        <dbReference type="ChEBI" id="CHEBI:57972"/>
        <dbReference type="ChEBI" id="CHEBI:70757"/>
        <dbReference type="ChEBI" id="CHEBI:83898"/>
        <dbReference type="ChEBI" id="CHEBI:456216"/>
        <dbReference type="EC" id="6.3.2.8"/>
    </reaction>
</comment>
<comment type="pathway">
    <text evidence="1">Cell wall biogenesis; peptidoglycan biosynthesis.</text>
</comment>
<comment type="subcellular location">
    <subcellularLocation>
        <location evidence="1">Cytoplasm</location>
    </subcellularLocation>
</comment>
<comment type="similarity">
    <text evidence="1">Belongs to the MurCDEF family.</text>
</comment>
<proteinExistence type="inferred from homology"/>
<organism>
    <name type="scientific">Nitrobacter hamburgensis (strain DSM 10229 / NCIMB 13809 / X14)</name>
    <dbReference type="NCBI Taxonomy" id="323097"/>
    <lineage>
        <taxon>Bacteria</taxon>
        <taxon>Pseudomonadati</taxon>
        <taxon>Pseudomonadota</taxon>
        <taxon>Alphaproteobacteria</taxon>
        <taxon>Hyphomicrobiales</taxon>
        <taxon>Nitrobacteraceae</taxon>
        <taxon>Nitrobacter</taxon>
    </lineage>
</organism>
<accession>Q1QNU2</accession>
<name>MURC_NITHX</name>
<keyword id="KW-0067">ATP-binding</keyword>
<keyword id="KW-0131">Cell cycle</keyword>
<keyword id="KW-0132">Cell division</keyword>
<keyword id="KW-0133">Cell shape</keyword>
<keyword id="KW-0961">Cell wall biogenesis/degradation</keyword>
<keyword id="KW-0963">Cytoplasm</keyword>
<keyword id="KW-0436">Ligase</keyword>
<keyword id="KW-0547">Nucleotide-binding</keyword>
<keyword id="KW-0573">Peptidoglycan synthesis</keyword>
<keyword id="KW-1185">Reference proteome</keyword>